<comment type="function">
    <text evidence="1">Catalyzes the attachment of proline to tRNA(Pro) in a two-step reaction: proline is first activated by ATP to form Pro-AMP and then transferred to the acceptor end of tRNA(Pro).</text>
</comment>
<comment type="catalytic activity">
    <reaction evidence="1">
        <text>tRNA(Pro) + L-proline + ATP = L-prolyl-tRNA(Pro) + AMP + diphosphate</text>
        <dbReference type="Rhea" id="RHEA:14305"/>
        <dbReference type="Rhea" id="RHEA-COMP:9700"/>
        <dbReference type="Rhea" id="RHEA-COMP:9702"/>
        <dbReference type="ChEBI" id="CHEBI:30616"/>
        <dbReference type="ChEBI" id="CHEBI:33019"/>
        <dbReference type="ChEBI" id="CHEBI:60039"/>
        <dbReference type="ChEBI" id="CHEBI:78442"/>
        <dbReference type="ChEBI" id="CHEBI:78532"/>
        <dbReference type="ChEBI" id="CHEBI:456215"/>
        <dbReference type="EC" id="6.1.1.15"/>
    </reaction>
</comment>
<comment type="subunit">
    <text evidence="1">Homodimer.</text>
</comment>
<comment type="subcellular location">
    <subcellularLocation>
        <location evidence="1">Cytoplasm</location>
    </subcellularLocation>
</comment>
<comment type="similarity">
    <text evidence="1">Belongs to the class-II aminoacyl-tRNA synthetase family. ProS type 2 subfamily.</text>
</comment>
<keyword id="KW-0030">Aminoacyl-tRNA synthetase</keyword>
<keyword id="KW-0067">ATP-binding</keyword>
<keyword id="KW-0963">Cytoplasm</keyword>
<keyword id="KW-0436">Ligase</keyword>
<keyword id="KW-0547">Nucleotide-binding</keyword>
<keyword id="KW-0648">Protein biosynthesis</keyword>
<name>SYP_RICTY</name>
<dbReference type="EC" id="6.1.1.15" evidence="1"/>
<dbReference type="EMBL" id="AE017197">
    <property type="protein sequence ID" value="AAU03849.1"/>
    <property type="molecule type" value="Genomic_DNA"/>
</dbReference>
<dbReference type="RefSeq" id="WP_011190833.1">
    <property type="nucleotide sequence ID" value="NC_006142.1"/>
</dbReference>
<dbReference type="SMR" id="Q68WZ3"/>
<dbReference type="KEGG" id="rty:RT0372"/>
<dbReference type="eggNOG" id="COG0442">
    <property type="taxonomic scope" value="Bacteria"/>
</dbReference>
<dbReference type="HOGENOM" id="CLU_016739_4_2_5"/>
<dbReference type="OrthoDB" id="9809052at2"/>
<dbReference type="Proteomes" id="UP000000604">
    <property type="component" value="Chromosome"/>
</dbReference>
<dbReference type="GO" id="GO:0005829">
    <property type="term" value="C:cytosol"/>
    <property type="evidence" value="ECO:0007669"/>
    <property type="project" value="TreeGrafter"/>
</dbReference>
<dbReference type="GO" id="GO:0005524">
    <property type="term" value="F:ATP binding"/>
    <property type="evidence" value="ECO:0007669"/>
    <property type="project" value="UniProtKB-UniRule"/>
</dbReference>
<dbReference type="GO" id="GO:0004827">
    <property type="term" value="F:proline-tRNA ligase activity"/>
    <property type="evidence" value="ECO:0007669"/>
    <property type="project" value="UniProtKB-UniRule"/>
</dbReference>
<dbReference type="GO" id="GO:0006433">
    <property type="term" value="P:prolyl-tRNA aminoacylation"/>
    <property type="evidence" value="ECO:0007669"/>
    <property type="project" value="UniProtKB-UniRule"/>
</dbReference>
<dbReference type="CDD" id="cd00861">
    <property type="entry name" value="ProRS_anticodon_short"/>
    <property type="match status" value="1"/>
</dbReference>
<dbReference type="CDD" id="cd00779">
    <property type="entry name" value="ProRS_core_prok"/>
    <property type="match status" value="1"/>
</dbReference>
<dbReference type="FunFam" id="3.30.930.10:FF:000042">
    <property type="entry name" value="probable proline--tRNA ligase, mitochondrial"/>
    <property type="match status" value="1"/>
</dbReference>
<dbReference type="FunFam" id="3.40.50.800:FF:000032">
    <property type="entry name" value="Proline--tRNA ligase"/>
    <property type="match status" value="1"/>
</dbReference>
<dbReference type="Gene3D" id="3.40.50.800">
    <property type="entry name" value="Anticodon-binding domain"/>
    <property type="match status" value="1"/>
</dbReference>
<dbReference type="Gene3D" id="3.30.930.10">
    <property type="entry name" value="Bira Bifunctional Protein, Domain 2"/>
    <property type="match status" value="1"/>
</dbReference>
<dbReference type="HAMAP" id="MF_01570">
    <property type="entry name" value="Pro_tRNA_synth_type2"/>
    <property type="match status" value="1"/>
</dbReference>
<dbReference type="InterPro" id="IPR002314">
    <property type="entry name" value="aa-tRNA-synt_IIb"/>
</dbReference>
<dbReference type="InterPro" id="IPR006195">
    <property type="entry name" value="aa-tRNA-synth_II"/>
</dbReference>
<dbReference type="InterPro" id="IPR045864">
    <property type="entry name" value="aa-tRNA-synth_II/BPL/LPL"/>
</dbReference>
<dbReference type="InterPro" id="IPR004154">
    <property type="entry name" value="Anticodon-bd"/>
</dbReference>
<dbReference type="InterPro" id="IPR036621">
    <property type="entry name" value="Anticodon-bd_dom_sf"/>
</dbReference>
<dbReference type="InterPro" id="IPR002316">
    <property type="entry name" value="Pro-tRNA-ligase_IIa"/>
</dbReference>
<dbReference type="InterPro" id="IPR004500">
    <property type="entry name" value="Pro-tRNA-synth_IIa_bac-type"/>
</dbReference>
<dbReference type="InterPro" id="IPR050062">
    <property type="entry name" value="Pro-tRNA_synthetase"/>
</dbReference>
<dbReference type="InterPro" id="IPR023716">
    <property type="entry name" value="Prolyl-tRNA_ligase_IIa_type2"/>
</dbReference>
<dbReference type="InterPro" id="IPR044140">
    <property type="entry name" value="ProRS_anticodon_short"/>
</dbReference>
<dbReference type="InterPro" id="IPR033730">
    <property type="entry name" value="ProRS_core_prok"/>
</dbReference>
<dbReference type="NCBIfam" id="NF008979">
    <property type="entry name" value="PRK12325.1"/>
    <property type="match status" value="1"/>
</dbReference>
<dbReference type="NCBIfam" id="TIGR00409">
    <property type="entry name" value="proS_fam_II"/>
    <property type="match status" value="1"/>
</dbReference>
<dbReference type="PANTHER" id="PTHR42753">
    <property type="entry name" value="MITOCHONDRIAL RIBOSOME PROTEIN L39/PROLYL-TRNA LIGASE FAMILY MEMBER"/>
    <property type="match status" value="1"/>
</dbReference>
<dbReference type="PANTHER" id="PTHR42753:SF2">
    <property type="entry name" value="PROLINE--TRNA LIGASE"/>
    <property type="match status" value="1"/>
</dbReference>
<dbReference type="Pfam" id="PF03129">
    <property type="entry name" value="HGTP_anticodon"/>
    <property type="match status" value="1"/>
</dbReference>
<dbReference type="Pfam" id="PF00587">
    <property type="entry name" value="tRNA-synt_2b"/>
    <property type="match status" value="1"/>
</dbReference>
<dbReference type="PRINTS" id="PR01046">
    <property type="entry name" value="TRNASYNTHPRO"/>
</dbReference>
<dbReference type="SUPFAM" id="SSF52954">
    <property type="entry name" value="Class II aaRS ABD-related"/>
    <property type="match status" value="1"/>
</dbReference>
<dbReference type="SUPFAM" id="SSF55681">
    <property type="entry name" value="Class II aaRS and biotin synthetases"/>
    <property type="match status" value="1"/>
</dbReference>
<dbReference type="PROSITE" id="PS50862">
    <property type="entry name" value="AA_TRNA_LIGASE_II"/>
    <property type="match status" value="1"/>
</dbReference>
<organism>
    <name type="scientific">Rickettsia typhi (strain ATCC VR-144 / Wilmington)</name>
    <dbReference type="NCBI Taxonomy" id="257363"/>
    <lineage>
        <taxon>Bacteria</taxon>
        <taxon>Pseudomonadati</taxon>
        <taxon>Pseudomonadota</taxon>
        <taxon>Alphaproteobacteria</taxon>
        <taxon>Rickettsiales</taxon>
        <taxon>Rickettsiaceae</taxon>
        <taxon>Rickettsieae</taxon>
        <taxon>Rickettsia</taxon>
        <taxon>typhus group</taxon>
    </lineage>
</organism>
<reference key="1">
    <citation type="journal article" date="2004" name="J. Bacteriol.">
        <title>Complete genome sequence of Rickettsia typhi and comparison with sequences of other Rickettsiae.</title>
        <authorList>
            <person name="McLeod M.P."/>
            <person name="Qin X."/>
            <person name="Karpathy S.E."/>
            <person name="Gioia J."/>
            <person name="Highlander S.K."/>
            <person name="Fox G.E."/>
            <person name="McNeill T.Z."/>
            <person name="Jiang H."/>
            <person name="Muzny D."/>
            <person name="Jacob L.S."/>
            <person name="Hawes A.C."/>
            <person name="Sodergren E."/>
            <person name="Gill R."/>
            <person name="Hume J."/>
            <person name="Morgan M."/>
            <person name="Fan G."/>
            <person name="Amin A.G."/>
            <person name="Gibbs R.A."/>
            <person name="Hong C."/>
            <person name="Yu X.-J."/>
            <person name="Walker D.H."/>
            <person name="Weinstock G.M."/>
        </authorList>
    </citation>
    <scope>NUCLEOTIDE SEQUENCE [LARGE SCALE GENOMIC DNA]</scope>
    <source>
        <strain>ATCC VR-144 / Wilmington</strain>
    </source>
</reference>
<gene>
    <name evidence="1" type="primary">proS</name>
    <name type="ordered locus">RT0372</name>
</gene>
<protein>
    <recommendedName>
        <fullName evidence="1">Proline--tRNA ligase</fullName>
        <ecNumber evidence="1">6.1.1.15</ecNumber>
    </recommendedName>
    <alternativeName>
        <fullName evidence="1">Prolyl-tRNA synthetase</fullName>
        <shortName evidence="1">ProRS</shortName>
    </alternativeName>
</protein>
<sequence>MLLSKYFLPILKEEPSEAQVISHKLMLRSGMIMKQASGLYTWLPLGLKVLKNIENIVRSNMNKVGALEVLMPCIQPAHLWIESGRFEYYGKEMLKFQDRHDNTLLFGPTNEDMITDIFRRNIKSYKDLPKNLYHIQWKFRDEIRPRFGVMRGREFLMKDAYSFDINQENAVNTYNKMYKAYINTFRDLGVFAIPVIADNGPIGGNLSHEFHIIAETGESTIYYDKRFKILKDNPDIDVEEIKSWYAAAEEKHDVNKLSSFPEGITSSKGIEVGHIFYIGSKYSVNMNALINDEYGKLIPVEMSSYGIGISRLAAAIIEANCDKKGIIWPFSVAPFKVSLINLNIHDNKCVELAAKTDKELSNKNIEVLYDDTEARPGSKFATHDLIGSPYQVIIGPKKAANNIVELKDRKTGVLEDIEIENLINYIRI</sequence>
<accession>Q68WZ3</accession>
<proteinExistence type="inferred from homology"/>
<feature type="chain" id="PRO_0000248917" description="Proline--tRNA ligase">
    <location>
        <begin position="1"/>
        <end position="428"/>
    </location>
</feature>
<evidence type="ECO:0000255" key="1">
    <source>
        <dbReference type="HAMAP-Rule" id="MF_01570"/>
    </source>
</evidence>